<keyword id="KW-0002">3D-structure</keyword>
<keyword id="KW-1035">Host cytoplasm</keyword>
<keyword id="KW-0945">Host-virus interaction</keyword>
<keyword id="KW-1090">Inhibition of host innate immune response by virus</keyword>
<keyword id="KW-1185">Reference proteome</keyword>
<keyword id="KW-0694">RNA-binding</keyword>
<keyword id="KW-0941">Suppressor of RNA silencing</keyword>
<keyword id="KW-0899">Viral immunoevasion</keyword>
<proteinExistence type="evidence at protein level"/>
<name>P21_BYVU</name>
<reference key="1">
    <citation type="journal article" date="1991" name="J. Gen. Virol.">
        <title>Nucleotide sequence of the 3'-terminal half of beet yellows closterovirus RNA genome: unique arrangement of eight virus genes.</title>
        <authorList>
            <person name="Agranovsky A.A."/>
            <person name="Boyko V.P."/>
            <person name="Karasev A.V."/>
            <person name="Lunina N.A."/>
            <person name="Koonin E.V."/>
            <person name="Dolja V.V."/>
        </authorList>
    </citation>
    <scope>NUCLEOTIDE SEQUENCE [GENOMIC RNA]</scope>
</reference>
<reference key="2">
    <citation type="journal article" date="1994" name="Virology">
        <title>Beet yellows closterovirus: complete genome structure and identification of a leader papain-like thiol protease.</title>
        <authorList>
            <person name="Agranovsky A.A."/>
            <person name="Koonin E.V."/>
            <person name="Boyko V.P."/>
            <person name="Maiss E."/>
            <person name="Froetschl R."/>
            <person name="Lunina N.A."/>
            <person name="Atabekov J.G."/>
        </authorList>
    </citation>
    <scope>NUCLEOTIDE SEQUENCE [GENOMIC RNA]</scope>
</reference>
<reference key="3">
    <citation type="journal article" date="2003" name="Virology">
        <title>Suppressor of RNA silencing encoded by Beet yellows virus.</title>
        <authorList>
            <person name="Reed J.C."/>
            <person name="Kasschau K.D."/>
            <person name="Prokhnevsky A.I."/>
            <person name="Gopinath K."/>
            <person name="Pogue G.P."/>
            <person name="Carrington J.C."/>
            <person name="Dolja V.V."/>
        </authorList>
    </citation>
    <scope>FUNCTION</scope>
    <scope>SUBCELLULAR LOCATION</scope>
</reference>
<reference key="4">
    <citation type="journal article" date="2005" name="Structure">
        <title>RNA silencing suppressor p21 of Beet yellows virus forms an RNA binding octameric ring structure.</title>
        <authorList>
            <person name="Ye K."/>
            <person name="Patel D.J."/>
        </authorList>
    </citation>
    <scope>X-RAY CRYSTALLOGRAPHY (3.3 ANGSTROMS)</scope>
</reference>
<organismHost>
    <name type="scientific">Beta vulgaris</name>
    <name type="common">Sugar beet</name>
    <dbReference type="NCBI Taxonomy" id="161934"/>
</organismHost>
<evidence type="ECO:0000269" key="1">
    <source>
    </source>
</evidence>
<evidence type="ECO:0007829" key="2">
    <source>
        <dbReference type="PDB" id="2CWO"/>
    </source>
</evidence>
<gene>
    <name type="ORF">ORF8</name>
</gene>
<comment type="function">
    <text evidence="1">Acts as a suppressor of RNA-mediated gene silencing, also known as post-transcriptional gene silencing (PTGS), a mechanism of plant viral defense that limits the accumulation of viral RNAs. Binds to ssRNAs and dsRNAs in vitro. Also functions as a replication enhancer.</text>
</comment>
<comment type="subunit">
    <text>Homooctamer. The eight monomers assemble into a closed ring that binds RNA.</text>
</comment>
<comment type="interaction">
    <interactant intactId="EBI-15556683">
        <id>Q08545</id>
    </interactant>
    <interactant intactId="EBI-15556683">
        <id>Q08545</id>
        <label>ORF8</label>
    </interactant>
    <organismsDiffer>false</organismsDiffer>
    <experiments>2</experiments>
</comment>
<comment type="subcellular location">
    <subcellularLocation>
        <location evidence="1">Host cytoplasm</location>
    </subcellularLocation>
</comment>
<sequence length="177" mass="20558">MKFFLKDGETSRALSRSESLLRRVKELGTNSQQSEISECVDEFNELASFNHLLVTVEHREWMEQHPNQSSKLRVPSRIGEMLKEIRAFLKVRVVTPMHKETASDTLNAFLEEYCRITGLAREDALREKMRKVKSVVLFHHSELLKFEVTENMFSYTELLKLNLSLRVISSQILGMAI</sequence>
<organism>
    <name type="scientific">Beet yellows virus (isolate Ukraine)</name>
    <name type="common">BYV</name>
    <name type="synonym">Sugar beet yellows virus</name>
    <dbReference type="NCBI Taxonomy" id="478555"/>
    <lineage>
        <taxon>Viruses</taxon>
        <taxon>Riboviria</taxon>
        <taxon>Orthornavirae</taxon>
        <taxon>Kitrinoviricota</taxon>
        <taxon>Alsuviricetes</taxon>
        <taxon>Martellivirales</taxon>
        <taxon>Closteroviridae</taxon>
        <taxon>Closterovirus</taxon>
        <taxon>Beet yellows virus</taxon>
    </lineage>
</organism>
<accession>Q08545</accession>
<feature type="chain" id="PRO_0000312570" description="RNA silencing suppressor">
    <location>
        <begin position="1"/>
        <end position="177"/>
    </location>
</feature>
<feature type="helix" evidence="2">
    <location>
        <begin position="10"/>
        <end position="24"/>
    </location>
</feature>
<feature type="helix" evidence="2">
    <location>
        <begin position="33"/>
        <end position="61"/>
    </location>
</feature>
<feature type="helix" evidence="2">
    <location>
        <begin position="78"/>
        <end position="89"/>
    </location>
</feature>
<feature type="turn" evidence="2">
    <location>
        <begin position="90"/>
        <end position="92"/>
    </location>
</feature>
<feature type="helix" evidence="2">
    <location>
        <begin position="102"/>
        <end position="117"/>
    </location>
</feature>
<feature type="helix" evidence="2">
    <location>
        <begin position="121"/>
        <end position="126"/>
    </location>
</feature>
<feature type="helix" evidence="2">
    <location>
        <begin position="129"/>
        <end position="144"/>
    </location>
</feature>
<feature type="helix" evidence="2">
    <location>
        <begin position="150"/>
        <end position="152"/>
    </location>
</feature>
<feature type="helix" evidence="2">
    <location>
        <begin position="156"/>
        <end position="160"/>
    </location>
</feature>
<feature type="helix" evidence="2">
    <location>
        <begin position="165"/>
        <end position="171"/>
    </location>
</feature>
<protein>
    <recommendedName>
        <fullName>RNA silencing suppressor</fullName>
    </recommendedName>
    <alternativeName>
        <fullName>21 kDa protein</fullName>
    </alternativeName>
    <alternativeName>
        <fullName>p21</fullName>
    </alternativeName>
</protein>
<dbReference type="EMBL" id="X53462">
    <property type="protein sequence ID" value="CAA37556.1"/>
    <property type="molecule type" value="Genomic_RNA"/>
</dbReference>
<dbReference type="EMBL" id="X73476">
    <property type="protein sequence ID" value="CAA51870.1"/>
    <property type="molecule type" value="Genomic_RNA"/>
</dbReference>
<dbReference type="PIR" id="S28717">
    <property type="entry name" value="S28717"/>
</dbReference>
<dbReference type="RefSeq" id="NP_041877.1">
    <property type="nucleotide sequence ID" value="NC_001598.1"/>
</dbReference>
<dbReference type="PDB" id="2CWO">
    <property type="method" value="X-ray"/>
    <property type="resolution" value="3.30 A"/>
    <property type="chains" value="A/B/C/D=1-177"/>
</dbReference>
<dbReference type="PDBsum" id="2CWO"/>
<dbReference type="SMR" id="Q08545"/>
<dbReference type="KEGG" id="vg:1724788"/>
<dbReference type="EvolutionaryTrace" id="Q08545"/>
<dbReference type="Proteomes" id="UP000000359">
    <property type="component" value="Segment"/>
</dbReference>
<dbReference type="GO" id="GO:0030430">
    <property type="term" value="C:host cell cytoplasm"/>
    <property type="evidence" value="ECO:0007669"/>
    <property type="project" value="UniProtKB-SubCell"/>
</dbReference>
<dbReference type="GO" id="GO:0042802">
    <property type="term" value="F:identical protein binding"/>
    <property type="evidence" value="ECO:0000353"/>
    <property type="project" value="IntAct"/>
</dbReference>
<dbReference type="GO" id="GO:0003723">
    <property type="term" value="F:RNA binding"/>
    <property type="evidence" value="ECO:0007669"/>
    <property type="project" value="UniProtKB-KW"/>
</dbReference>
<dbReference type="GO" id="GO:0052170">
    <property type="term" value="P:symbiont-mediated suppression of host innate immune response"/>
    <property type="evidence" value="ECO:0007669"/>
    <property type="project" value="UniProtKB-KW"/>
</dbReference>
<dbReference type="Gene3D" id="1.10.1200.170">
    <property type="entry name" value="RNA silencing suppressor P21, C-terminal domain"/>
    <property type="match status" value="1"/>
</dbReference>
<dbReference type="Gene3D" id="1.20.58.1200">
    <property type="entry name" value="RNA silencing suppressor P21, N-terminal domain"/>
    <property type="match status" value="1"/>
</dbReference>
<dbReference type="InterPro" id="IPR021742">
    <property type="entry name" value="RSS_P20_N"/>
</dbReference>
<dbReference type="InterPro" id="IPR021575">
    <property type="entry name" value="Suppressor_P21_C"/>
</dbReference>
<dbReference type="Pfam" id="PF11757">
    <property type="entry name" value="RSS_P20"/>
    <property type="match status" value="1"/>
</dbReference>
<dbReference type="Pfam" id="PF11479">
    <property type="entry name" value="Suppressor_P21"/>
    <property type="match status" value="1"/>
</dbReference>